<name>NAMPT_RAT</name>
<accession>Q80Z29</accession>
<accession>Q2VT47</accession>
<evidence type="ECO:0000250" key="1"/>
<evidence type="ECO:0000250" key="2">
    <source>
        <dbReference type="UniProtKB" id="P43490"/>
    </source>
</evidence>
<evidence type="ECO:0000250" key="3">
    <source>
        <dbReference type="UniProtKB" id="Q99KQ4"/>
    </source>
</evidence>
<evidence type="ECO:0000269" key="4">
    <source>
    </source>
</evidence>
<evidence type="ECO:0000269" key="5">
    <source>
    </source>
</evidence>
<evidence type="ECO:0000305" key="6"/>
<evidence type="ECO:0007829" key="7">
    <source>
        <dbReference type="PDB" id="2G95"/>
    </source>
</evidence>
<evidence type="ECO:0007829" key="8">
    <source>
        <dbReference type="PDB" id="2G96"/>
    </source>
</evidence>
<evidence type="ECO:0007829" key="9">
    <source>
        <dbReference type="PDB" id="2G97"/>
    </source>
</evidence>
<protein>
    <recommendedName>
        <fullName>Nicotinamide phosphoribosyltransferase</fullName>
        <shortName>NAmPRTase</shortName>
        <shortName>Nampt</shortName>
        <ecNumber evidence="3">2.4.2.12</ecNumber>
    </recommendedName>
    <alternativeName>
        <fullName>Pre-B-cell colony-enhancing factor 1 homolog</fullName>
        <shortName>PBEF</shortName>
    </alternativeName>
    <alternativeName>
        <fullName>Visfatin</fullName>
    </alternativeName>
</protein>
<reference key="1">
    <citation type="journal article" date="2003" name="FEBS Lett.">
        <title>Growth phase-dependent changes in the subcellular localization of pre-B-cell colony-enhancing factor.</title>
        <authorList>
            <person name="Kitani T."/>
            <person name="Okuno S."/>
            <person name="Fujisawa H."/>
        </authorList>
    </citation>
    <scope>NUCLEOTIDE SEQUENCE [MRNA]</scope>
    <scope>SUBCELLULAR LOCATION</scope>
    <scope>TISSUE SPECIFICITY</scope>
</reference>
<reference key="2">
    <citation type="submission" date="2004-11" db="EMBL/GenBank/DDBJ databases">
        <title>NAD biosynthesis pathway mediated by nicotinamide phosphoribosyltransferase attenuates ischemic neuronal cell death.</title>
        <authorList>
            <person name="Xing J."/>
            <person name="Gao Y."/>
            <person name="Cao G."/>
            <person name="Chen J."/>
        </authorList>
    </citation>
    <scope>NUCLEOTIDE SEQUENCE [MRNA]</scope>
    <source>
        <strain>Sprague-Dawley</strain>
        <tissue>Brain</tissue>
    </source>
</reference>
<reference key="3">
    <citation type="journal article" date="2004" name="Genome Res.">
        <title>The status, quality, and expansion of the NIH full-length cDNA project: the Mammalian Gene Collection (MGC).</title>
        <authorList>
            <consortium name="The MGC Project Team"/>
        </authorList>
    </citation>
    <scope>NUCLEOTIDE SEQUENCE [LARGE SCALE MRNA]</scope>
    <source>
        <tissue>Heart</tissue>
    </source>
</reference>
<reference key="4">
    <citation type="journal article" date="2006" name="J. Mol. Biol.">
        <title>Crystal structure of visfatin/pre-B cell colony-enhancing factor 1/nicotinamide phosphoribosyltransferase, free and in complex with the anti-cancer agent FK-866.</title>
        <authorList>
            <person name="Kim M.-K."/>
            <person name="Lee J.H."/>
            <person name="Kim H."/>
            <person name="Park S.J."/>
            <person name="Kim S.H."/>
            <person name="Kang G.B."/>
            <person name="Lee Y.S."/>
            <person name="Kim J.B."/>
            <person name="Kim K.K."/>
            <person name="Suh S.W."/>
            <person name="Eom S.H."/>
        </authorList>
    </citation>
    <scope>X-RAY CRYSTALLOGRAPHY (1.9 ANGSTROMS) IN COMPLEXES WITH NICOTINAMIDE MONONUCLEOTIDE AND FK866</scope>
    <scope>SUBUNIT</scope>
</reference>
<proteinExistence type="evidence at protein level"/>
<keyword id="KW-0002">3D-structure</keyword>
<keyword id="KW-0007">Acetylation</keyword>
<keyword id="KW-0090">Biological rhythms</keyword>
<keyword id="KW-0202">Cytokine</keyword>
<keyword id="KW-0963">Cytoplasm</keyword>
<keyword id="KW-0328">Glycosyltransferase</keyword>
<keyword id="KW-0539">Nucleus</keyword>
<keyword id="KW-0597">Phosphoprotein</keyword>
<keyword id="KW-0662">Pyridine nucleotide biosynthesis</keyword>
<keyword id="KW-1185">Reference proteome</keyword>
<keyword id="KW-0964">Secreted</keyword>
<keyword id="KW-0808">Transferase</keyword>
<dbReference type="EC" id="2.4.2.12" evidence="3"/>
<dbReference type="EMBL" id="AB081730">
    <property type="protein sequence ID" value="BAC66022.1"/>
    <property type="molecule type" value="mRNA"/>
</dbReference>
<dbReference type="EMBL" id="AY831728">
    <property type="protein sequence ID" value="AAX49410.1"/>
    <property type="molecule type" value="mRNA"/>
</dbReference>
<dbReference type="EMBL" id="BC085681">
    <property type="protein sequence ID" value="AAH85681.1"/>
    <property type="molecule type" value="mRNA"/>
</dbReference>
<dbReference type="RefSeq" id="NP_808789.1">
    <property type="nucleotide sequence ID" value="NM_177928.3"/>
</dbReference>
<dbReference type="PDB" id="2G95">
    <property type="method" value="X-ray"/>
    <property type="resolution" value="1.90 A"/>
    <property type="chains" value="A/B=1-491"/>
</dbReference>
<dbReference type="PDB" id="2G96">
    <property type="method" value="X-ray"/>
    <property type="resolution" value="2.90 A"/>
    <property type="chains" value="A/B=1-491"/>
</dbReference>
<dbReference type="PDB" id="2G97">
    <property type="method" value="X-ray"/>
    <property type="resolution" value="2.90 A"/>
    <property type="chains" value="A/B=1-491"/>
</dbReference>
<dbReference type="PDB" id="3G8E">
    <property type="method" value="X-ray"/>
    <property type="resolution" value="3.00 A"/>
    <property type="chains" value="A/B=1-491"/>
</dbReference>
<dbReference type="PDBsum" id="2G95"/>
<dbReference type="PDBsum" id="2G96"/>
<dbReference type="PDBsum" id="2G97"/>
<dbReference type="PDBsum" id="3G8E"/>
<dbReference type="SMR" id="Q80Z29"/>
<dbReference type="FunCoup" id="Q80Z29">
    <property type="interactions" value="1693"/>
</dbReference>
<dbReference type="STRING" id="10116.ENSRNOP00000013043"/>
<dbReference type="BindingDB" id="Q80Z29"/>
<dbReference type="ChEMBL" id="CHEMBL3259475"/>
<dbReference type="iPTMnet" id="Q80Z29"/>
<dbReference type="PhosphoSitePlus" id="Q80Z29"/>
<dbReference type="jPOST" id="Q80Z29"/>
<dbReference type="PaxDb" id="10116-ENSRNOP00000013043"/>
<dbReference type="Ensembl" id="ENSRNOT00000013043.7">
    <property type="protein sequence ID" value="ENSRNOP00000013043.5"/>
    <property type="gene ID" value="ENSRNOG00000009754.7"/>
</dbReference>
<dbReference type="GeneID" id="297508"/>
<dbReference type="KEGG" id="rno:297508"/>
<dbReference type="UCSC" id="RGD:631365">
    <property type="organism name" value="rat"/>
</dbReference>
<dbReference type="AGR" id="RGD:631365"/>
<dbReference type="CTD" id="10135"/>
<dbReference type="RGD" id="631365">
    <property type="gene designation" value="Nampt"/>
</dbReference>
<dbReference type="eggNOG" id="ENOG502QSGN">
    <property type="taxonomic scope" value="Eukaryota"/>
</dbReference>
<dbReference type="GeneTree" id="ENSGT00940000153456"/>
<dbReference type="HOGENOM" id="CLU_012550_2_0_1"/>
<dbReference type="InParanoid" id="Q80Z29"/>
<dbReference type="BRENDA" id="2.4.2.12">
    <property type="organism ID" value="5301"/>
</dbReference>
<dbReference type="Reactome" id="R-RNO-197264">
    <property type="pathway name" value="Nicotinamide salvaging"/>
</dbReference>
<dbReference type="SABIO-RK" id="Q80Z29"/>
<dbReference type="UniPathway" id="UPA00253">
    <property type="reaction ID" value="UER00890"/>
</dbReference>
<dbReference type="EvolutionaryTrace" id="Q80Z29"/>
<dbReference type="PRO" id="PR:Q80Z29"/>
<dbReference type="Proteomes" id="UP000002494">
    <property type="component" value="Chromosome 6"/>
</dbReference>
<dbReference type="Bgee" id="ENSRNOG00000009754">
    <property type="expression patterns" value="Expressed in skeletal muscle tissue and 19 other cell types or tissues"/>
</dbReference>
<dbReference type="ExpressionAtlas" id="Q80Z29">
    <property type="expression patterns" value="baseline and differential"/>
</dbReference>
<dbReference type="GO" id="GO:0005737">
    <property type="term" value="C:cytoplasm"/>
    <property type="evidence" value="ECO:0000266"/>
    <property type="project" value="RGD"/>
</dbReference>
<dbReference type="GO" id="GO:0005615">
    <property type="term" value="C:extracellular space"/>
    <property type="evidence" value="ECO:0007669"/>
    <property type="project" value="UniProtKB-KW"/>
</dbReference>
<dbReference type="GO" id="GO:0005634">
    <property type="term" value="C:nucleus"/>
    <property type="evidence" value="ECO:0007669"/>
    <property type="project" value="UniProtKB-SubCell"/>
</dbReference>
<dbReference type="GO" id="GO:0005125">
    <property type="term" value="F:cytokine activity"/>
    <property type="evidence" value="ECO:0000314"/>
    <property type="project" value="RGD"/>
</dbReference>
<dbReference type="GO" id="GO:1901363">
    <property type="term" value="F:heterocyclic compound binding"/>
    <property type="evidence" value="ECO:0000314"/>
    <property type="project" value="RGD"/>
</dbReference>
<dbReference type="GO" id="GO:0042802">
    <property type="term" value="F:identical protein binding"/>
    <property type="evidence" value="ECO:0000314"/>
    <property type="project" value="RGD"/>
</dbReference>
<dbReference type="GO" id="GO:0047280">
    <property type="term" value="F:nicotinamide phosphoribosyltransferase activity"/>
    <property type="evidence" value="ECO:0000314"/>
    <property type="project" value="RGD"/>
</dbReference>
<dbReference type="GO" id="GO:0000166">
    <property type="term" value="F:nucleotide binding"/>
    <property type="evidence" value="ECO:0000314"/>
    <property type="project" value="RGD"/>
</dbReference>
<dbReference type="GO" id="GO:1904646">
    <property type="term" value="P:cellular response to amyloid-beta"/>
    <property type="evidence" value="ECO:0000270"/>
    <property type="project" value="RGD"/>
</dbReference>
<dbReference type="GO" id="GO:0071456">
    <property type="term" value="P:cellular response to hypoxia"/>
    <property type="evidence" value="ECO:0000270"/>
    <property type="project" value="RGD"/>
</dbReference>
<dbReference type="GO" id="GO:0071479">
    <property type="term" value="P:cellular response to ionizing radiation"/>
    <property type="evidence" value="ECO:0000270"/>
    <property type="project" value="RGD"/>
</dbReference>
<dbReference type="GO" id="GO:0032922">
    <property type="term" value="P:circadian regulation of gene expression"/>
    <property type="evidence" value="ECO:0000250"/>
    <property type="project" value="UniProtKB"/>
</dbReference>
<dbReference type="GO" id="GO:0007623">
    <property type="term" value="P:circadian rhythm"/>
    <property type="evidence" value="ECO:0000270"/>
    <property type="project" value="RGD"/>
</dbReference>
<dbReference type="GO" id="GO:0007565">
    <property type="term" value="P:female pregnancy"/>
    <property type="evidence" value="ECO:0000270"/>
    <property type="project" value="RGD"/>
</dbReference>
<dbReference type="GO" id="GO:0006954">
    <property type="term" value="P:inflammatory response"/>
    <property type="evidence" value="ECO:0000266"/>
    <property type="project" value="RGD"/>
</dbReference>
<dbReference type="GO" id="GO:0001774">
    <property type="term" value="P:microglial cell activation"/>
    <property type="evidence" value="ECO:0000315"/>
    <property type="project" value="RGD"/>
</dbReference>
<dbReference type="GO" id="GO:0009435">
    <property type="term" value="P:NAD biosynthetic process"/>
    <property type="evidence" value="ECO:0000266"/>
    <property type="project" value="RGD"/>
</dbReference>
<dbReference type="GO" id="GO:0010507">
    <property type="term" value="P:negative regulation of autophagy"/>
    <property type="evidence" value="ECO:0000315"/>
    <property type="project" value="RGD"/>
</dbReference>
<dbReference type="GO" id="GO:2000773">
    <property type="term" value="P:negative regulation of cellular senescence"/>
    <property type="evidence" value="ECO:0000314"/>
    <property type="project" value="RGD"/>
</dbReference>
<dbReference type="GO" id="GO:0043123">
    <property type="term" value="P:positive regulation of canonical NF-kappaB signal transduction"/>
    <property type="evidence" value="ECO:0000266"/>
    <property type="project" value="RGD"/>
</dbReference>
<dbReference type="GO" id="GO:0070374">
    <property type="term" value="P:positive regulation of ERK1 and ERK2 cascade"/>
    <property type="evidence" value="ECO:0000266"/>
    <property type="project" value="RGD"/>
</dbReference>
<dbReference type="GO" id="GO:0010628">
    <property type="term" value="P:positive regulation of gene expression"/>
    <property type="evidence" value="ECO:0000266"/>
    <property type="project" value="RGD"/>
</dbReference>
<dbReference type="GO" id="GO:0048661">
    <property type="term" value="P:positive regulation of smooth muscle cell proliferation"/>
    <property type="evidence" value="ECO:0000315"/>
    <property type="project" value="RGD"/>
</dbReference>
<dbReference type="GO" id="GO:0045944">
    <property type="term" value="P:positive regulation of transcription by RNA polymerase II"/>
    <property type="evidence" value="ECO:0000266"/>
    <property type="project" value="RGD"/>
</dbReference>
<dbReference type="GO" id="GO:0014916">
    <property type="term" value="P:regulation of lung blood pressure"/>
    <property type="evidence" value="ECO:0000315"/>
    <property type="project" value="RGD"/>
</dbReference>
<dbReference type="GO" id="GO:1905377">
    <property type="term" value="P:response to D-galactose"/>
    <property type="evidence" value="ECO:0000270"/>
    <property type="project" value="RGD"/>
</dbReference>
<dbReference type="CDD" id="cd01569">
    <property type="entry name" value="PBEF_like"/>
    <property type="match status" value="1"/>
</dbReference>
<dbReference type="FunFam" id="3.20.20.70:FF:000080">
    <property type="entry name" value="Nicotinamide phosphoribosyltransferase"/>
    <property type="match status" value="1"/>
</dbReference>
<dbReference type="Gene3D" id="3.20.20.70">
    <property type="entry name" value="Aldolase class I"/>
    <property type="match status" value="1"/>
</dbReference>
<dbReference type="InterPro" id="IPR013785">
    <property type="entry name" value="Aldolase_TIM"/>
</dbReference>
<dbReference type="InterPro" id="IPR041529">
    <property type="entry name" value="DUF5598"/>
</dbReference>
<dbReference type="InterPro" id="IPR041525">
    <property type="entry name" value="N/Namide_PRibTrfase"/>
</dbReference>
<dbReference type="InterPro" id="IPR016471">
    <property type="entry name" value="Nicotinamide_PRibTrfase"/>
</dbReference>
<dbReference type="InterPro" id="IPR036068">
    <property type="entry name" value="Nicotinate_pribotase-like_C"/>
</dbReference>
<dbReference type="NCBIfam" id="NF006629">
    <property type="entry name" value="PRK09198.1"/>
    <property type="match status" value="1"/>
</dbReference>
<dbReference type="PANTHER" id="PTHR43816">
    <property type="entry name" value="NICOTINAMIDE PHOSPHORIBOSYLTRANSFERASE"/>
    <property type="match status" value="1"/>
</dbReference>
<dbReference type="PANTHER" id="PTHR43816:SF1">
    <property type="entry name" value="NICOTINAMIDE PHOSPHORIBOSYLTRANSFERASE"/>
    <property type="match status" value="1"/>
</dbReference>
<dbReference type="Pfam" id="PF18127">
    <property type="entry name" value="NAMPT_N"/>
    <property type="match status" value="1"/>
</dbReference>
<dbReference type="Pfam" id="PF04095">
    <property type="entry name" value="NAPRTase"/>
    <property type="match status" value="1"/>
</dbReference>
<dbReference type="PIRSF" id="PIRSF005943">
    <property type="entry name" value="NMPRT"/>
    <property type="match status" value="1"/>
</dbReference>
<dbReference type="SUPFAM" id="SSF51690">
    <property type="entry name" value="Nicotinate/Quinolinate PRTase C-terminal domain-like"/>
    <property type="match status" value="1"/>
</dbReference>
<comment type="function">
    <text evidence="2 3">Catalyzes the condensation of nicotinamide with 5-phosphoribosyl-1-pyrophosphate to yield nicotinamide mononucleotide, an intermediate in the biosynthesis of NAD. It is the rate limiting component in the mammalian NAD biosynthesis pathway. The secreted form behaves both as a cytokine with immunomodulating properties and an adipokine with anti-diabetic properties, it has no enzymatic activity, partly because of lack of activation by ATP, which has a low level in extracellular space and plasma. Plays a role in the modulation of circadian clock function. NAMPT-dependent oscillatory production of NAD regulates oscillation of clock target gene expression by releasing the core clock component: CLOCK-BMAL1 heterodimer from NAD-dependent SIRT1-mediated suppression.</text>
</comment>
<comment type="catalytic activity">
    <reaction evidence="3">
        <text>beta-nicotinamide D-ribonucleotide + diphosphate = 5-phospho-alpha-D-ribose 1-diphosphate + nicotinamide + H(+)</text>
        <dbReference type="Rhea" id="RHEA:16149"/>
        <dbReference type="ChEBI" id="CHEBI:14649"/>
        <dbReference type="ChEBI" id="CHEBI:15378"/>
        <dbReference type="ChEBI" id="CHEBI:17154"/>
        <dbReference type="ChEBI" id="CHEBI:33019"/>
        <dbReference type="ChEBI" id="CHEBI:58017"/>
        <dbReference type="EC" id="2.4.2.12"/>
    </reaction>
    <physiologicalReaction direction="right-to-left" evidence="3">
        <dbReference type="Rhea" id="RHEA:16151"/>
    </physiologicalReaction>
</comment>
<comment type="pathway">
    <text>Cofactor biosynthesis; NAD(+) biosynthesis; nicotinamide D-ribonucleotide from 5-phospho-alpha-D-ribose 1-diphosphate and nicotinamide: step 1/1.</text>
</comment>
<comment type="subunit">
    <text evidence="5">Homodimer.</text>
</comment>
<comment type="subcellular location">
    <subcellularLocation>
        <location evidence="4">Nucleus</location>
    </subcellularLocation>
    <subcellularLocation>
        <location evidence="4">Cytoplasm</location>
    </subcellularLocation>
    <subcellularLocation>
        <location evidence="2">Secreted</location>
    </subcellularLocation>
    <text evidence="2">Under non-inflammatory conditions, visfatin predominantly exhibits a granular pattern within the nucleus. Secreted by endothelial cells upon IL-1beta stimulation. Abundantly secreted in milk, reaching 100-fold higher concentrations compared to maternal serum.</text>
</comment>
<comment type="tissue specificity">
    <text evidence="4">Expressed in various tissues. At the highest level in liver and at the second highest in heart. The amount is higher in heart than in lung.</text>
</comment>
<comment type="similarity">
    <text evidence="6">Belongs to the NAPRTase family.</text>
</comment>
<feature type="chain" id="PRO_0000205866" description="Nicotinamide phosphoribosyltransferase">
    <location>
        <begin position="1"/>
        <end position="491"/>
    </location>
</feature>
<feature type="binding site" evidence="1">
    <location>
        <position position="196"/>
    </location>
    <ligand>
        <name>diphosphate</name>
        <dbReference type="ChEBI" id="CHEBI:33019"/>
    </ligand>
</feature>
<feature type="binding site" evidence="1">
    <location>
        <position position="219"/>
    </location>
    <ligand>
        <name>beta-nicotinamide D-ribonucleotide</name>
        <dbReference type="ChEBI" id="CHEBI:14649"/>
    </ligand>
</feature>
<feature type="binding site" evidence="1">
    <location>
        <position position="247"/>
    </location>
    <ligand>
        <name>diphosphate</name>
        <dbReference type="ChEBI" id="CHEBI:33019"/>
    </ligand>
</feature>
<feature type="binding site">
    <location>
        <begin position="311"/>
        <end position="313"/>
    </location>
    <ligand>
        <name>beta-nicotinamide D-ribonucleotide</name>
        <dbReference type="ChEBI" id="CHEBI:14649"/>
    </ligand>
</feature>
<feature type="binding site" evidence="1">
    <location>
        <position position="311"/>
    </location>
    <ligand>
        <name>diphosphate</name>
        <dbReference type="ChEBI" id="CHEBI:33019"/>
    </ligand>
</feature>
<feature type="binding site">
    <location>
        <begin position="353"/>
        <end position="354"/>
    </location>
    <ligand>
        <name>beta-nicotinamide D-ribonucleotide</name>
        <dbReference type="ChEBI" id="CHEBI:14649"/>
    </ligand>
</feature>
<feature type="binding site">
    <location>
        <position position="384"/>
    </location>
    <ligand>
        <name>beta-nicotinamide D-ribonucleotide</name>
        <dbReference type="ChEBI" id="CHEBI:14649"/>
    </ligand>
</feature>
<feature type="binding site">
    <location>
        <position position="392"/>
    </location>
    <ligand>
        <name>beta-nicotinamide D-ribonucleotide</name>
        <dbReference type="ChEBI" id="CHEBI:14649"/>
    </ligand>
</feature>
<feature type="modified residue" description="N-acetylmethionine" evidence="2">
    <location>
        <position position="1"/>
    </location>
</feature>
<feature type="modified residue" description="Phosphotyrosine" evidence="2">
    <location>
        <position position="188"/>
    </location>
</feature>
<feature type="modified residue" description="Phosphoserine" evidence="2">
    <location>
        <position position="472"/>
    </location>
</feature>
<feature type="helix" evidence="7">
    <location>
        <begin position="11"/>
        <end position="13"/>
    </location>
</feature>
<feature type="strand" evidence="8">
    <location>
        <begin position="14"/>
        <end position="16"/>
    </location>
</feature>
<feature type="helix" evidence="7">
    <location>
        <begin position="17"/>
        <end position="24"/>
    </location>
</feature>
<feature type="strand" evidence="7">
    <location>
        <begin position="30"/>
        <end position="39"/>
    </location>
</feature>
<feature type="strand" evidence="7">
    <location>
        <begin position="56"/>
        <end position="58"/>
    </location>
</feature>
<feature type="helix" evidence="7">
    <location>
        <begin position="62"/>
        <end position="69"/>
    </location>
</feature>
<feature type="strand" evidence="9">
    <location>
        <begin position="71"/>
        <end position="73"/>
    </location>
</feature>
<feature type="helix" evidence="7">
    <location>
        <begin position="77"/>
        <end position="91"/>
    </location>
</feature>
<feature type="helix" evidence="7">
    <location>
        <begin position="98"/>
        <end position="108"/>
    </location>
</feature>
<feature type="strand" evidence="7">
    <location>
        <begin position="114"/>
        <end position="118"/>
    </location>
</feature>
<feature type="strand" evidence="7">
    <location>
        <begin position="124"/>
        <end position="138"/>
    </location>
</feature>
<feature type="helix" evidence="7">
    <location>
        <begin position="139"/>
        <end position="143"/>
    </location>
</feature>
<feature type="helix" evidence="7">
    <location>
        <begin position="144"/>
        <end position="147"/>
    </location>
</feature>
<feature type="helix" evidence="7">
    <location>
        <begin position="149"/>
        <end position="153"/>
    </location>
</feature>
<feature type="helix" evidence="7">
    <location>
        <begin position="156"/>
        <end position="180"/>
    </location>
</feature>
<feature type="helix" evidence="7">
    <location>
        <begin position="186"/>
        <end position="188"/>
    </location>
</feature>
<feature type="strand" evidence="7">
    <location>
        <begin position="189"/>
        <end position="192"/>
    </location>
</feature>
<feature type="helix" evidence="7">
    <location>
        <begin position="195"/>
        <end position="197"/>
    </location>
</feature>
<feature type="strand" evidence="8">
    <location>
        <begin position="198"/>
        <end position="200"/>
    </location>
</feature>
<feature type="helix" evidence="7">
    <location>
        <begin position="201"/>
        <end position="211"/>
    </location>
</feature>
<feature type="turn" evidence="7">
    <location>
        <begin position="212"/>
        <end position="214"/>
    </location>
</feature>
<feature type="strand" evidence="7">
    <location>
        <begin position="217"/>
        <end position="219"/>
    </location>
</feature>
<feature type="helix" evidence="7">
    <location>
        <begin position="222"/>
        <end position="230"/>
    </location>
</feature>
<feature type="strand" evidence="9">
    <location>
        <begin position="234"/>
        <end position="236"/>
    </location>
</feature>
<feature type="strand" evidence="7">
    <location>
        <begin position="238"/>
        <end position="240"/>
    </location>
</feature>
<feature type="helix" evidence="7">
    <location>
        <begin position="247"/>
        <end position="250"/>
    </location>
</feature>
<feature type="helix" evidence="7">
    <location>
        <begin position="251"/>
        <end position="253"/>
    </location>
</feature>
<feature type="helix" evidence="7">
    <location>
        <begin position="255"/>
        <end position="257"/>
    </location>
</feature>
<feature type="helix" evidence="7">
    <location>
        <begin position="258"/>
        <end position="268"/>
    </location>
</feature>
<feature type="strand" evidence="8">
    <location>
        <begin position="270"/>
        <end position="272"/>
    </location>
</feature>
<feature type="strand" evidence="7">
    <location>
        <begin position="274"/>
        <end position="278"/>
    </location>
</feature>
<feature type="helix" evidence="7">
    <location>
        <begin position="283"/>
        <end position="288"/>
    </location>
</feature>
<feature type="helix" evidence="7">
    <location>
        <begin position="289"/>
        <end position="294"/>
    </location>
</feature>
<feature type="helix" evidence="7">
    <location>
        <begin position="296"/>
        <end position="299"/>
    </location>
</feature>
<feature type="strand" evidence="7">
    <location>
        <begin position="308"/>
        <end position="311"/>
    </location>
</feature>
<feature type="helix" evidence="7">
    <location>
        <begin position="317"/>
        <end position="331"/>
    </location>
</feature>
<feature type="strand" evidence="7">
    <location>
        <begin position="348"/>
        <end position="352"/>
    </location>
</feature>
<feature type="helix" evidence="7">
    <location>
        <begin position="358"/>
        <end position="370"/>
    </location>
</feature>
<feature type="helix" evidence="7">
    <location>
        <begin position="375"/>
        <end position="377"/>
    </location>
</feature>
<feature type="strand" evidence="7">
    <location>
        <begin position="378"/>
        <end position="383"/>
    </location>
</feature>
<feature type="helix" evidence="7">
    <location>
        <begin position="384"/>
        <end position="387"/>
    </location>
</feature>
<feature type="helix" evidence="7">
    <location>
        <begin position="392"/>
        <end position="394"/>
    </location>
</feature>
<feature type="strand" evidence="7">
    <location>
        <begin position="397"/>
        <end position="406"/>
    </location>
</feature>
<feature type="strand" evidence="7">
    <location>
        <begin position="409"/>
        <end position="411"/>
    </location>
</feature>
<feature type="helix" evidence="8">
    <location>
        <begin position="421"/>
        <end position="423"/>
    </location>
</feature>
<feature type="strand" evidence="7">
    <location>
        <begin position="431"/>
        <end position="434"/>
    </location>
</feature>
<feature type="strand" evidence="7">
    <location>
        <begin position="440"/>
        <end position="443"/>
    </location>
</feature>
<feature type="helix" evidence="7">
    <location>
        <begin position="447"/>
        <end position="450"/>
    </location>
</feature>
<feature type="strand" evidence="9">
    <location>
        <begin position="453"/>
        <end position="455"/>
    </location>
</feature>
<feature type="strand" evidence="7">
    <location>
        <begin position="459"/>
        <end position="463"/>
    </location>
</feature>
<feature type="helix" evidence="7">
    <location>
        <begin position="473"/>
        <end position="479"/>
    </location>
</feature>
<organism>
    <name type="scientific">Rattus norvegicus</name>
    <name type="common">Rat</name>
    <dbReference type="NCBI Taxonomy" id="10116"/>
    <lineage>
        <taxon>Eukaryota</taxon>
        <taxon>Metazoa</taxon>
        <taxon>Chordata</taxon>
        <taxon>Craniata</taxon>
        <taxon>Vertebrata</taxon>
        <taxon>Euteleostomi</taxon>
        <taxon>Mammalia</taxon>
        <taxon>Eutheria</taxon>
        <taxon>Euarchontoglires</taxon>
        <taxon>Glires</taxon>
        <taxon>Rodentia</taxon>
        <taxon>Myomorpha</taxon>
        <taxon>Muroidea</taxon>
        <taxon>Muridae</taxon>
        <taxon>Murinae</taxon>
        <taxon>Rattus</taxon>
    </lineage>
</organism>
<sequence>MNAAAEAEFNILLATDSYKVTHYKQYPPNTSKVYSYFECREKKTENSKVRKVKYEETVFYGLQYILNKYLKGKVVTKEKIQEAKEVYREHFQDDVFNERGWNYILEKYDGHLPIEVKAVPEGSVIPRGNVLFTVENTDPECYWLTNWIETILVQSWYPITVATNSREQKKILAKYLLETSGNLDGLEYKLHDFGYRGVSSQETAGIGASAHLVNFKGTDTVAGIALIKKYYGTKDPVPGYSVPAAEHSTITAWGKDHEKDAFEHIVTQFSSVPVSVVSDSYDIYNACEKIWGEDLRHLIVSRSTEAPLIIRPDSGNPLDTVLKVLDILGKKFPVSENSKGYKLLPPYLRVIQGDGVDINTLQEIVEGMKQKKWSIENVSFGSGGALLQKLTRDLLNCSFKCSYVVTNGLGVNVFKDPVADPNKRSKKGRLSLHRTPAGTFVTLEEGKGDLEEYGHDLLHTVFKNGKVTKSYSFDEVRKNAQLNMEQDVAPH</sequence>
<gene>
    <name type="primary">Nampt</name>
    <name type="synonym">Pbef1</name>
</gene>